<evidence type="ECO:0000255" key="1">
    <source>
        <dbReference type="HAMAP-Rule" id="MF_00480"/>
    </source>
</evidence>
<evidence type="ECO:0000305" key="2"/>
<dbReference type="EMBL" id="CP000542">
    <property type="protein sequence ID" value="ABM57028.1"/>
    <property type="molecule type" value="Genomic_DNA"/>
</dbReference>
<dbReference type="RefSeq" id="WP_011809039.1">
    <property type="nucleotide sequence ID" value="NC_008786.1"/>
</dbReference>
<dbReference type="SMR" id="A1WHC1"/>
<dbReference type="STRING" id="391735.Veis_1260"/>
<dbReference type="GeneID" id="76459907"/>
<dbReference type="KEGG" id="vei:Veis_1260"/>
<dbReference type="eggNOG" id="COG0049">
    <property type="taxonomic scope" value="Bacteria"/>
</dbReference>
<dbReference type="HOGENOM" id="CLU_072226_1_1_4"/>
<dbReference type="OrthoDB" id="9807653at2"/>
<dbReference type="Proteomes" id="UP000000374">
    <property type="component" value="Chromosome"/>
</dbReference>
<dbReference type="GO" id="GO:0015935">
    <property type="term" value="C:small ribosomal subunit"/>
    <property type="evidence" value="ECO:0007669"/>
    <property type="project" value="InterPro"/>
</dbReference>
<dbReference type="GO" id="GO:0019843">
    <property type="term" value="F:rRNA binding"/>
    <property type="evidence" value="ECO:0007669"/>
    <property type="project" value="UniProtKB-UniRule"/>
</dbReference>
<dbReference type="GO" id="GO:0003735">
    <property type="term" value="F:structural constituent of ribosome"/>
    <property type="evidence" value="ECO:0007669"/>
    <property type="project" value="InterPro"/>
</dbReference>
<dbReference type="GO" id="GO:0000049">
    <property type="term" value="F:tRNA binding"/>
    <property type="evidence" value="ECO:0007669"/>
    <property type="project" value="UniProtKB-UniRule"/>
</dbReference>
<dbReference type="GO" id="GO:0006412">
    <property type="term" value="P:translation"/>
    <property type="evidence" value="ECO:0007669"/>
    <property type="project" value="UniProtKB-UniRule"/>
</dbReference>
<dbReference type="CDD" id="cd14869">
    <property type="entry name" value="uS7_Bacteria"/>
    <property type="match status" value="1"/>
</dbReference>
<dbReference type="FunFam" id="1.10.455.10:FF:000001">
    <property type="entry name" value="30S ribosomal protein S7"/>
    <property type="match status" value="1"/>
</dbReference>
<dbReference type="Gene3D" id="1.10.455.10">
    <property type="entry name" value="Ribosomal protein S7 domain"/>
    <property type="match status" value="1"/>
</dbReference>
<dbReference type="HAMAP" id="MF_00480_B">
    <property type="entry name" value="Ribosomal_uS7_B"/>
    <property type="match status" value="1"/>
</dbReference>
<dbReference type="InterPro" id="IPR000235">
    <property type="entry name" value="Ribosomal_uS7"/>
</dbReference>
<dbReference type="InterPro" id="IPR005717">
    <property type="entry name" value="Ribosomal_uS7_bac/org-type"/>
</dbReference>
<dbReference type="InterPro" id="IPR020606">
    <property type="entry name" value="Ribosomal_uS7_CS"/>
</dbReference>
<dbReference type="InterPro" id="IPR023798">
    <property type="entry name" value="Ribosomal_uS7_dom"/>
</dbReference>
<dbReference type="InterPro" id="IPR036823">
    <property type="entry name" value="Ribosomal_uS7_dom_sf"/>
</dbReference>
<dbReference type="NCBIfam" id="TIGR01029">
    <property type="entry name" value="rpsG_bact"/>
    <property type="match status" value="1"/>
</dbReference>
<dbReference type="PANTHER" id="PTHR11205">
    <property type="entry name" value="RIBOSOMAL PROTEIN S7"/>
    <property type="match status" value="1"/>
</dbReference>
<dbReference type="Pfam" id="PF00177">
    <property type="entry name" value="Ribosomal_S7"/>
    <property type="match status" value="1"/>
</dbReference>
<dbReference type="PIRSF" id="PIRSF002122">
    <property type="entry name" value="RPS7p_RPS7a_RPS5e_RPS7o"/>
    <property type="match status" value="1"/>
</dbReference>
<dbReference type="SUPFAM" id="SSF47973">
    <property type="entry name" value="Ribosomal protein S7"/>
    <property type="match status" value="1"/>
</dbReference>
<dbReference type="PROSITE" id="PS00052">
    <property type="entry name" value="RIBOSOMAL_S7"/>
    <property type="match status" value="1"/>
</dbReference>
<gene>
    <name evidence="1" type="primary">rpsG</name>
    <name type="ordered locus">Veis_1260</name>
</gene>
<proteinExistence type="inferred from homology"/>
<reference key="1">
    <citation type="submission" date="2006-12" db="EMBL/GenBank/DDBJ databases">
        <title>Complete sequence of chromosome 1 of Verminephrobacter eiseniae EF01-2.</title>
        <authorList>
            <person name="Copeland A."/>
            <person name="Lucas S."/>
            <person name="Lapidus A."/>
            <person name="Barry K."/>
            <person name="Detter J.C."/>
            <person name="Glavina del Rio T."/>
            <person name="Dalin E."/>
            <person name="Tice H."/>
            <person name="Pitluck S."/>
            <person name="Chertkov O."/>
            <person name="Brettin T."/>
            <person name="Bruce D."/>
            <person name="Han C."/>
            <person name="Tapia R."/>
            <person name="Gilna P."/>
            <person name="Schmutz J."/>
            <person name="Larimer F."/>
            <person name="Land M."/>
            <person name="Hauser L."/>
            <person name="Kyrpides N."/>
            <person name="Kim E."/>
            <person name="Stahl D."/>
            <person name="Richardson P."/>
        </authorList>
    </citation>
    <scope>NUCLEOTIDE SEQUENCE [LARGE SCALE GENOMIC DNA]</scope>
    <source>
        <strain>EF01-2</strain>
    </source>
</reference>
<accession>A1WHC1</accession>
<name>RS7_VEREI</name>
<feature type="chain" id="PRO_1000014317" description="Small ribosomal subunit protein uS7">
    <location>
        <begin position="1"/>
        <end position="157"/>
    </location>
</feature>
<protein>
    <recommendedName>
        <fullName evidence="1">Small ribosomal subunit protein uS7</fullName>
    </recommendedName>
    <alternativeName>
        <fullName evidence="2">30S ribosomal protein S7</fullName>
    </alternativeName>
</protein>
<keyword id="KW-1185">Reference proteome</keyword>
<keyword id="KW-0687">Ribonucleoprotein</keyword>
<keyword id="KW-0689">Ribosomal protein</keyword>
<keyword id="KW-0694">RNA-binding</keyword>
<keyword id="KW-0699">rRNA-binding</keyword>
<keyword id="KW-0820">tRNA-binding</keyword>
<sequence>MPRRREVPKREILPDPKFGNVELSKFMNVIMESGKKAVAERIIYGALELIEKKHPDKDPLEAFTVAINNVKPMVEVKSRRVGGANYQVPVEVRPVRRLALSMRWIKEAARKRGEKSMAQRLANELLEATEGRGGAMKKRDEVHRMAEANKAFSHFRF</sequence>
<comment type="function">
    <text evidence="1">One of the primary rRNA binding proteins, it binds directly to 16S rRNA where it nucleates assembly of the head domain of the 30S subunit. Is located at the subunit interface close to the decoding center, probably blocks exit of the E-site tRNA.</text>
</comment>
<comment type="subunit">
    <text evidence="1">Part of the 30S ribosomal subunit. Contacts proteins S9 and S11.</text>
</comment>
<comment type="similarity">
    <text evidence="1">Belongs to the universal ribosomal protein uS7 family.</text>
</comment>
<organism>
    <name type="scientific">Verminephrobacter eiseniae (strain EF01-2)</name>
    <dbReference type="NCBI Taxonomy" id="391735"/>
    <lineage>
        <taxon>Bacteria</taxon>
        <taxon>Pseudomonadati</taxon>
        <taxon>Pseudomonadota</taxon>
        <taxon>Betaproteobacteria</taxon>
        <taxon>Burkholderiales</taxon>
        <taxon>Comamonadaceae</taxon>
        <taxon>Verminephrobacter</taxon>
    </lineage>
</organism>